<organism>
    <name type="scientific">Yersinia pestis bv. Antiqua (strain Angola)</name>
    <dbReference type="NCBI Taxonomy" id="349746"/>
    <lineage>
        <taxon>Bacteria</taxon>
        <taxon>Pseudomonadati</taxon>
        <taxon>Pseudomonadota</taxon>
        <taxon>Gammaproteobacteria</taxon>
        <taxon>Enterobacterales</taxon>
        <taxon>Yersiniaceae</taxon>
        <taxon>Yersinia</taxon>
    </lineage>
</organism>
<name>AROE_YERPG</name>
<sequence length="273" mass="29595">MDQKFAVFGNPISHSKSPRIHTLFSEQTGIEHRYGKVLAPSEAFENTLVSFFADGAQGANITTPFKERAYDQCDELTDRASLAGAVNTIKRLEDGRLLGDNTDGIGLLSDLERQNLIRTTDHILLVGAGGAARGVILPLLSYGCTVVVTNRTHTRAQQLAKVFNHIGDIDVCEMSELAGQRFDLVINATASGLHGEVPNLPAAILTSQTRCYDMFYQAGTTPFLAWAQRLGLADYADGLGMLVGQAAHAFKLWHGVMPEITPVLAQLRSELGK</sequence>
<evidence type="ECO:0000255" key="1">
    <source>
        <dbReference type="HAMAP-Rule" id="MF_00222"/>
    </source>
</evidence>
<feature type="chain" id="PRO_1000100156" description="Shikimate dehydrogenase (NADP(+))">
    <location>
        <begin position="1"/>
        <end position="273"/>
    </location>
</feature>
<feature type="active site" description="Proton acceptor" evidence="1">
    <location>
        <position position="66"/>
    </location>
</feature>
<feature type="binding site" evidence="1">
    <location>
        <begin position="15"/>
        <end position="17"/>
    </location>
    <ligand>
        <name>shikimate</name>
        <dbReference type="ChEBI" id="CHEBI:36208"/>
    </ligand>
</feature>
<feature type="binding site" evidence="1">
    <location>
        <position position="62"/>
    </location>
    <ligand>
        <name>shikimate</name>
        <dbReference type="ChEBI" id="CHEBI:36208"/>
    </ligand>
</feature>
<feature type="binding site" evidence="1">
    <location>
        <position position="78"/>
    </location>
    <ligand>
        <name>NADP(+)</name>
        <dbReference type="ChEBI" id="CHEBI:58349"/>
    </ligand>
</feature>
<feature type="binding site" evidence="1">
    <location>
        <position position="87"/>
    </location>
    <ligand>
        <name>shikimate</name>
        <dbReference type="ChEBI" id="CHEBI:36208"/>
    </ligand>
</feature>
<feature type="binding site" evidence="1">
    <location>
        <position position="103"/>
    </location>
    <ligand>
        <name>shikimate</name>
        <dbReference type="ChEBI" id="CHEBI:36208"/>
    </ligand>
</feature>
<feature type="binding site" evidence="1">
    <location>
        <begin position="127"/>
        <end position="131"/>
    </location>
    <ligand>
        <name>NADP(+)</name>
        <dbReference type="ChEBI" id="CHEBI:58349"/>
    </ligand>
</feature>
<feature type="binding site" evidence="1">
    <location>
        <begin position="150"/>
        <end position="155"/>
    </location>
    <ligand>
        <name>NADP(+)</name>
        <dbReference type="ChEBI" id="CHEBI:58349"/>
    </ligand>
</feature>
<feature type="binding site" evidence="1">
    <location>
        <position position="218"/>
    </location>
    <ligand>
        <name>NADP(+)</name>
        <dbReference type="ChEBI" id="CHEBI:58349"/>
    </ligand>
</feature>
<feature type="binding site" evidence="1">
    <location>
        <position position="238"/>
    </location>
    <ligand>
        <name>NADP(+)</name>
        <dbReference type="ChEBI" id="CHEBI:58349"/>
    </ligand>
</feature>
<protein>
    <recommendedName>
        <fullName evidence="1">Shikimate dehydrogenase (NADP(+))</fullName>
        <shortName evidence="1">SDH</shortName>
        <ecNumber evidence="1">1.1.1.25</ecNumber>
    </recommendedName>
</protein>
<comment type="function">
    <text evidence="1">Involved in the biosynthesis of the chorismate, which leads to the biosynthesis of aromatic amino acids. Catalyzes the reversible NADPH linked reduction of 3-dehydroshikimate (DHSA) to yield shikimate (SA).</text>
</comment>
<comment type="catalytic activity">
    <reaction evidence="1">
        <text>shikimate + NADP(+) = 3-dehydroshikimate + NADPH + H(+)</text>
        <dbReference type="Rhea" id="RHEA:17737"/>
        <dbReference type="ChEBI" id="CHEBI:15378"/>
        <dbReference type="ChEBI" id="CHEBI:16630"/>
        <dbReference type="ChEBI" id="CHEBI:36208"/>
        <dbReference type="ChEBI" id="CHEBI:57783"/>
        <dbReference type="ChEBI" id="CHEBI:58349"/>
        <dbReference type="EC" id="1.1.1.25"/>
    </reaction>
</comment>
<comment type="pathway">
    <text evidence="1">Metabolic intermediate biosynthesis; chorismate biosynthesis; chorismate from D-erythrose 4-phosphate and phosphoenolpyruvate: step 4/7.</text>
</comment>
<comment type="subunit">
    <text evidence="1">Homodimer.</text>
</comment>
<comment type="similarity">
    <text evidence="1">Belongs to the shikimate dehydrogenase family.</text>
</comment>
<reference key="1">
    <citation type="journal article" date="2010" name="J. Bacteriol.">
        <title>Genome sequence of the deep-rooted Yersinia pestis strain Angola reveals new insights into the evolution and pangenome of the plague bacterium.</title>
        <authorList>
            <person name="Eppinger M."/>
            <person name="Worsham P.L."/>
            <person name="Nikolich M.P."/>
            <person name="Riley D.R."/>
            <person name="Sebastian Y."/>
            <person name="Mou S."/>
            <person name="Achtman M."/>
            <person name="Lindler L.E."/>
            <person name="Ravel J."/>
        </authorList>
    </citation>
    <scope>NUCLEOTIDE SEQUENCE [LARGE SCALE GENOMIC DNA]</scope>
    <source>
        <strain>Angola</strain>
    </source>
</reference>
<accession>A9R934</accession>
<dbReference type="EC" id="1.1.1.25" evidence="1"/>
<dbReference type="EMBL" id="CP000901">
    <property type="protein sequence ID" value="ABX85898.1"/>
    <property type="molecule type" value="Genomic_DNA"/>
</dbReference>
<dbReference type="RefSeq" id="WP_002209026.1">
    <property type="nucleotide sequence ID" value="NZ_CP009935.1"/>
</dbReference>
<dbReference type="SMR" id="A9R934"/>
<dbReference type="GeneID" id="57974357"/>
<dbReference type="KEGG" id="ypg:YpAngola_A0622"/>
<dbReference type="PATRIC" id="fig|349746.12.peg.1574"/>
<dbReference type="UniPathway" id="UPA00053">
    <property type="reaction ID" value="UER00087"/>
</dbReference>
<dbReference type="GO" id="GO:0005829">
    <property type="term" value="C:cytosol"/>
    <property type="evidence" value="ECO:0007669"/>
    <property type="project" value="TreeGrafter"/>
</dbReference>
<dbReference type="GO" id="GO:0050661">
    <property type="term" value="F:NADP binding"/>
    <property type="evidence" value="ECO:0007669"/>
    <property type="project" value="InterPro"/>
</dbReference>
<dbReference type="GO" id="GO:0004764">
    <property type="term" value="F:shikimate 3-dehydrogenase (NADP+) activity"/>
    <property type="evidence" value="ECO:0007669"/>
    <property type="project" value="UniProtKB-UniRule"/>
</dbReference>
<dbReference type="GO" id="GO:0008652">
    <property type="term" value="P:amino acid biosynthetic process"/>
    <property type="evidence" value="ECO:0007669"/>
    <property type="project" value="UniProtKB-KW"/>
</dbReference>
<dbReference type="GO" id="GO:0009073">
    <property type="term" value="P:aromatic amino acid family biosynthetic process"/>
    <property type="evidence" value="ECO:0007669"/>
    <property type="project" value="UniProtKB-KW"/>
</dbReference>
<dbReference type="GO" id="GO:0009423">
    <property type="term" value="P:chorismate biosynthetic process"/>
    <property type="evidence" value="ECO:0007669"/>
    <property type="project" value="UniProtKB-UniRule"/>
</dbReference>
<dbReference type="GO" id="GO:0019632">
    <property type="term" value="P:shikimate metabolic process"/>
    <property type="evidence" value="ECO:0007669"/>
    <property type="project" value="InterPro"/>
</dbReference>
<dbReference type="CDD" id="cd01065">
    <property type="entry name" value="NAD_bind_Shikimate_DH"/>
    <property type="match status" value="1"/>
</dbReference>
<dbReference type="FunFam" id="3.40.50.10860:FF:000006">
    <property type="entry name" value="Shikimate dehydrogenase (NADP(+))"/>
    <property type="match status" value="1"/>
</dbReference>
<dbReference type="FunFam" id="3.40.50.720:FF:000104">
    <property type="entry name" value="Shikimate dehydrogenase (NADP(+))"/>
    <property type="match status" value="1"/>
</dbReference>
<dbReference type="Gene3D" id="3.40.50.10860">
    <property type="entry name" value="Leucine Dehydrogenase, chain A, domain 1"/>
    <property type="match status" value="1"/>
</dbReference>
<dbReference type="Gene3D" id="3.40.50.720">
    <property type="entry name" value="NAD(P)-binding Rossmann-like Domain"/>
    <property type="match status" value="1"/>
</dbReference>
<dbReference type="HAMAP" id="MF_00222">
    <property type="entry name" value="Shikimate_DH_AroE"/>
    <property type="match status" value="1"/>
</dbReference>
<dbReference type="InterPro" id="IPR046346">
    <property type="entry name" value="Aminoacid_DH-like_N_sf"/>
</dbReference>
<dbReference type="InterPro" id="IPR036291">
    <property type="entry name" value="NAD(P)-bd_dom_sf"/>
</dbReference>
<dbReference type="InterPro" id="IPR041121">
    <property type="entry name" value="SDH_C"/>
</dbReference>
<dbReference type="InterPro" id="IPR011342">
    <property type="entry name" value="Shikimate_DH"/>
</dbReference>
<dbReference type="InterPro" id="IPR013708">
    <property type="entry name" value="Shikimate_DH-bd_N"/>
</dbReference>
<dbReference type="InterPro" id="IPR022893">
    <property type="entry name" value="Shikimate_DH_fam"/>
</dbReference>
<dbReference type="InterPro" id="IPR006151">
    <property type="entry name" value="Shikm_DH/Glu-tRNA_Rdtase"/>
</dbReference>
<dbReference type="NCBIfam" id="TIGR00507">
    <property type="entry name" value="aroE"/>
    <property type="match status" value="1"/>
</dbReference>
<dbReference type="NCBIfam" id="NF001310">
    <property type="entry name" value="PRK00258.1-2"/>
    <property type="match status" value="1"/>
</dbReference>
<dbReference type="PANTHER" id="PTHR21089:SF1">
    <property type="entry name" value="BIFUNCTIONAL 3-DEHYDROQUINATE DEHYDRATASE_SHIKIMATE DEHYDROGENASE, CHLOROPLASTIC"/>
    <property type="match status" value="1"/>
</dbReference>
<dbReference type="PANTHER" id="PTHR21089">
    <property type="entry name" value="SHIKIMATE DEHYDROGENASE"/>
    <property type="match status" value="1"/>
</dbReference>
<dbReference type="Pfam" id="PF18317">
    <property type="entry name" value="SDH_C"/>
    <property type="match status" value="1"/>
</dbReference>
<dbReference type="Pfam" id="PF01488">
    <property type="entry name" value="Shikimate_DH"/>
    <property type="match status" value="1"/>
</dbReference>
<dbReference type="Pfam" id="PF08501">
    <property type="entry name" value="Shikimate_dh_N"/>
    <property type="match status" value="1"/>
</dbReference>
<dbReference type="SUPFAM" id="SSF53223">
    <property type="entry name" value="Aminoacid dehydrogenase-like, N-terminal domain"/>
    <property type="match status" value="1"/>
</dbReference>
<dbReference type="SUPFAM" id="SSF51735">
    <property type="entry name" value="NAD(P)-binding Rossmann-fold domains"/>
    <property type="match status" value="1"/>
</dbReference>
<proteinExistence type="inferred from homology"/>
<gene>
    <name evidence="1" type="primary">aroE</name>
    <name type="ordered locus">YpAngola_A0622</name>
</gene>
<keyword id="KW-0028">Amino-acid biosynthesis</keyword>
<keyword id="KW-0057">Aromatic amino acid biosynthesis</keyword>
<keyword id="KW-0521">NADP</keyword>
<keyword id="KW-0560">Oxidoreductase</keyword>